<evidence type="ECO:0000255" key="1">
    <source>
        <dbReference type="HAMAP-Rule" id="MF_00028"/>
    </source>
</evidence>
<gene>
    <name evidence="1" type="primary">cobQ</name>
    <name type="ordered locus">NATL1_16121</name>
</gene>
<dbReference type="EMBL" id="CP000553">
    <property type="protein sequence ID" value="ABM76169.1"/>
    <property type="molecule type" value="Genomic_DNA"/>
</dbReference>
<dbReference type="SMR" id="A2C3V9"/>
<dbReference type="KEGG" id="pme:NATL1_16121"/>
<dbReference type="eggNOG" id="COG1492">
    <property type="taxonomic scope" value="Bacteria"/>
</dbReference>
<dbReference type="HOGENOM" id="CLU_019250_2_2_3"/>
<dbReference type="UniPathway" id="UPA00148"/>
<dbReference type="Proteomes" id="UP000002592">
    <property type="component" value="Chromosome"/>
</dbReference>
<dbReference type="GO" id="GO:0015420">
    <property type="term" value="F:ABC-type vitamin B12 transporter activity"/>
    <property type="evidence" value="ECO:0007669"/>
    <property type="project" value="UniProtKB-UniRule"/>
</dbReference>
<dbReference type="GO" id="GO:0003824">
    <property type="term" value="F:catalytic activity"/>
    <property type="evidence" value="ECO:0007669"/>
    <property type="project" value="InterPro"/>
</dbReference>
<dbReference type="GO" id="GO:0009236">
    <property type="term" value="P:cobalamin biosynthetic process"/>
    <property type="evidence" value="ECO:0007669"/>
    <property type="project" value="UniProtKB-UniRule"/>
</dbReference>
<dbReference type="CDD" id="cd01750">
    <property type="entry name" value="GATase1_CobQ"/>
    <property type="match status" value="1"/>
</dbReference>
<dbReference type="Gene3D" id="3.40.50.880">
    <property type="match status" value="1"/>
</dbReference>
<dbReference type="Gene3D" id="3.40.50.300">
    <property type="entry name" value="P-loop containing nucleotide triphosphate hydrolases"/>
    <property type="match status" value="1"/>
</dbReference>
<dbReference type="HAMAP" id="MF_00028">
    <property type="entry name" value="CobQ"/>
    <property type="match status" value="1"/>
</dbReference>
<dbReference type="InterPro" id="IPR029062">
    <property type="entry name" value="Class_I_gatase-like"/>
</dbReference>
<dbReference type="InterPro" id="IPR002586">
    <property type="entry name" value="CobQ/CobB/MinD/ParA_Nub-bd_dom"/>
</dbReference>
<dbReference type="InterPro" id="IPR033949">
    <property type="entry name" value="CobQ_GATase1"/>
</dbReference>
<dbReference type="InterPro" id="IPR004459">
    <property type="entry name" value="CobQ_synth"/>
</dbReference>
<dbReference type="InterPro" id="IPR011698">
    <property type="entry name" value="GATase_3"/>
</dbReference>
<dbReference type="InterPro" id="IPR027417">
    <property type="entry name" value="P-loop_NTPase"/>
</dbReference>
<dbReference type="NCBIfam" id="TIGR00313">
    <property type="entry name" value="cobQ"/>
    <property type="match status" value="1"/>
</dbReference>
<dbReference type="NCBIfam" id="NF001989">
    <property type="entry name" value="PRK00784.1"/>
    <property type="match status" value="1"/>
</dbReference>
<dbReference type="PANTHER" id="PTHR21343:SF1">
    <property type="entry name" value="COBYRIC ACID SYNTHASE"/>
    <property type="match status" value="1"/>
</dbReference>
<dbReference type="PANTHER" id="PTHR21343">
    <property type="entry name" value="DETHIOBIOTIN SYNTHETASE"/>
    <property type="match status" value="1"/>
</dbReference>
<dbReference type="Pfam" id="PF01656">
    <property type="entry name" value="CbiA"/>
    <property type="match status" value="1"/>
</dbReference>
<dbReference type="Pfam" id="PF07685">
    <property type="entry name" value="GATase_3"/>
    <property type="match status" value="1"/>
</dbReference>
<dbReference type="SUPFAM" id="SSF52317">
    <property type="entry name" value="Class I glutamine amidotransferase-like"/>
    <property type="match status" value="1"/>
</dbReference>
<dbReference type="SUPFAM" id="SSF52540">
    <property type="entry name" value="P-loop containing nucleoside triphosphate hydrolases"/>
    <property type="match status" value="1"/>
</dbReference>
<dbReference type="PROSITE" id="PS51274">
    <property type="entry name" value="GATASE_COBBQ"/>
    <property type="match status" value="1"/>
</dbReference>
<keyword id="KW-0169">Cobalamin biosynthesis</keyword>
<keyword id="KW-0315">Glutamine amidotransferase</keyword>
<protein>
    <recommendedName>
        <fullName evidence="1">Cobyric acid synthase</fullName>
    </recommendedName>
</protein>
<reference key="1">
    <citation type="journal article" date="2007" name="PLoS Genet.">
        <title>Patterns and implications of gene gain and loss in the evolution of Prochlorococcus.</title>
        <authorList>
            <person name="Kettler G.C."/>
            <person name="Martiny A.C."/>
            <person name="Huang K."/>
            <person name="Zucker J."/>
            <person name="Coleman M.L."/>
            <person name="Rodrigue S."/>
            <person name="Chen F."/>
            <person name="Lapidus A."/>
            <person name="Ferriera S."/>
            <person name="Johnson J."/>
            <person name="Steglich C."/>
            <person name="Church G.M."/>
            <person name="Richardson P."/>
            <person name="Chisholm S.W."/>
        </authorList>
    </citation>
    <scope>NUCLEOTIDE SEQUENCE [LARGE SCALE GENOMIC DNA]</scope>
    <source>
        <strain>NATL1A</strain>
    </source>
</reference>
<feature type="chain" id="PRO_0000332364" description="Cobyric acid synthase">
    <location>
        <begin position="1"/>
        <end position="494"/>
    </location>
</feature>
<feature type="domain" description="GATase cobBQ-type" evidence="1">
    <location>
        <begin position="248"/>
        <end position="444"/>
    </location>
</feature>
<feature type="active site" description="Nucleophile" evidence="1">
    <location>
        <position position="329"/>
    </location>
</feature>
<feature type="active site" evidence="1">
    <location>
        <position position="436"/>
    </location>
</feature>
<organism>
    <name type="scientific">Prochlorococcus marinus (strain NATL1A)</name>
    <dbReference type="NCBI Taxonomy" id="167555"/>
    <lineage>
        <taxon>Bacteria</taxon>
        <taxon>Bacillati</taxon>
        <taxon>Cyanobacteriota</taxon>
        <taxon>Cyanophyceae</taxon>
        <taxon>Synechococcales</taxon>
        <taxon>Prochlorococcaceae</taxon>
        <taxon>Prochlorococcus</taxon>
    </lineage>
</organism>
<accession>A2C3V9</accession>
<sequence length="494" mass="55335">MVLGTSSGAGKTLIATAICRCLRRKGEQPIPFKGQNMSNNAWVDTQGREMAYSQALQSWSAGLEPSAEMNPVLLKPKGDCTSEVIHLGKSVGTSKAINYYEDWFDSGWEAIKKGLAILLKSKIDGRLILEGAGSPVEVNLQHKDLTNLKLAKFLNANCILVADIERGGVFAQIIGTIALMKPDEKKLIKGIIINRFRGDKALFESGVTWIEKETGIPVLGILPWLKEIFPPEDSLDLLERKQVNKSAEIEIAIIKLPRISNFSDLDPFFSDSSIQMRWIEPGQDLGNPDVLIIPGSKQTIKDLESLNKTGLSNQIKNYAKKGGNIFGICGGLQMLGKTLEDPHKQESIKEQNTFSNMGMNLLPIKTTFGEIKHTSQREEKVSWPVSQSLKGFEMHYGESDLINNTDSEIISLFKNSSLGWVIEKKDKSFVGGTYLHGIFENDEWRRQWINKIRQKKGLNHLKIDKENNNDKRERLLDLLTDAFEKNINIDILIK</sequence>
<comment type="function">
    <text evidence="1">Catalyzes amidations at positions B, D, E, and G on adenosylcobyrinic A,C-diamide. NH(2) groups are provided by glutamine, and one molecule of ATP is hydrogenolyzed for each amidation.</text>
</comment>
<comment type="pathway">
    <text evidence="1">Cofactor biosynthesis; adenosylcobalamin biosynthesis.</text>
</comment>
<comment type="similarity">
    <text evidence="1">Belongs to the CobB/CobQ family. CobQ subfamily.</text>
</comment>
<name>COBQ_PROM1</name>
<proteinExistence type="inferred from homology"/>